<reference key="1">
    <citation type="submission" date="2009-01" db="EMBL/GenBank/DDBJ databases">
        <title>Complete sequence of Chloroflexus sp. Y-400-fl.</title>
        <authorList>
            <consortium name="US DOE Joint Genome Institute"/>
            <person name="Lucas S."/>
            <person name="Copeland A."/>
            <person name="Lapidus A."/>
            <person name="Glavina del Rio T."/>
            <person name="Dalin E."/>
            <person name="Tice H."/>
            <person name="Bruce D."/>
            <person name="Goodwin L."/>
            <person name="Pitluck S."/>
            <person name="Sims D."/>
            <person name="Kiss H."/>
            <person name="Brettin T."/>
            <person name="Detter J.C."/>
            <person name="Han C."/>
            <person name="Larimer F."/>
            <person name="Land M."/>
            <person name="Hauser L."/>
            <person name="Kyrpides N."/>
            <person name="Ovchinnikova G."/>
            <person name="Bryant D.A."/>
            <person name="Richardson P."/>
        </authorList>
    </citation>
    <scope>NUCLEOTIDE SEQUENCE [LARGE SCALE GENOMIC DNA]</scope>
    <source>
        <strain>ATCC 29364 / DSM 637 / Y-400-fl</strain>
    </source>
</reference>
<accession>B9LEV9</accession>
<gene>
    <name evidence="1" type="primary">trpD</name>
    <name type="ordered locus">Chy400_1896</name>
</gene>
<dbReference type="EC" id="2.4.2.18" evidence="1"/>
<dbReference type="EMBL" id="CP001364">
    <property type="protein sequence ID" value="ACM53303.1"/>
    <property type="molecule type" value="Genomic_DNA"/>
</dbReference>
<dbReference type="SMR" id="B9LEV9"/>
<dbReference type="KEGG" id="chl:Chy400_1896"/>
<dbReference type="HOGENOM" id="CLU_034315_2_1_0"/>
<dbReference type="OrthoDB" id="9806430at2"/>
<dbReference type="UniPathway" id="UPA00035">
    <property type="reaction ID" value="UER00041"/>
</dbReference>
<dbReference type="GO" id="GO:0005829">
    <property type="term" value="C:cytosol"/>
    <property type="evidence" value="ECO:0007669"/>
    <property type="project" value="TreeGrafter"/>
</dbReference>
<dbReference type="GO" id="GO:0004048">
    <property type="term" value="F:anthranilate phosphoribosyltransferase activity"/>
    <property type="evidence" value="ECO:0007669"/>
    <property type="project" value="UniProtKB-UniRule"/>
</dbReference>
<dbReference type="GO" id="GO:0000287">
    <property type="term" value="F:magnesium ion binding"/>
    <property type="evidence" value="ECO:0007669"/>
    <property type="project" value="UniProtKB-UniRule"/>
</dbReference>
<dbReference type="GO" id="GO:0000162">
    <property type="term" value="P:L-tryptophan biosynthetic process"/>
    <property type="evidence" value="ECO:0007669"/>
    <property type="project" value="UniProtKB-UniRule"/>
</dbReference>
<dbReference type="FunFam" id="1.20.970.10:FF:000006">
    <property type="entry name" value="Anthranilate phosphoribosyltransferase"/>
    <property type="match status" value="1"/>
</dbReference>
<dbReference type="FunFam" id="3.40.1030.10:FF:000002">
    <property type="entry name" value="Anthranilate phosphoribosyltransferase"/>
    <property type="match status" value="1"/>
</dbReference>
<dbReference type="Gene3D" id="3.40.1030.10">
    <property type="entry name" value="Nucleoside phosphorylase/phosphoribosyltransferase catalytic domain"/>
    <property type="match status" value="1"/>
</dbReference>
<dbReference type="Gene3D" id="1.20.970.10">
    <property type="entry name" value="Transferase, Pyrimidine Nucleoside Phosphorylase, Chain C"/>
    <property type="match status" value="1"/>
</dbReference>
<dbReference type="HAMAP" id="MF_00211">
    <property type="entry name" value="TrpD"/>
    <property type="match status" value="1"/>
</dbReference>
<dbReference type="InterPro" id="IPR005940">
    <property type="entry name" value="Anthranilate_Pribosyl_Tfrase"/>
</dbReference>
<dbReference type="InterPro" id="IPR000312">
    <property type="entry name" value="Glycosyl_Trfase_fam3"/>
</dbReference>
<dbReference type="InterPro" id="IPR017459">
    <property type="entry name" value="Glycosyl_Trfase_fam3_N_dom"/>
</dbReference>
<dbReference type="InterPro" id="IPR036320">
    <property type="entry name" value="Glycosyl_Trfase_fam3_N_dom_sf"/>
</dbReference>
<dbReference type="InterPro" id="IPR035902">
    <property type="entry name" value="Nuc_phospho_transferase"/>
</dbReference>
<dbReference type="NCBIfam" id="TIGR01245">
    <property type="entry name" value="trpD"/>
    <property type="match status" value="1"/>
</dbReference>
<dbReference type="PANTHER" id="PTHR43285">
    <property type="entry name" value="ANTHRANILATE PHOSPHORIBOSYLTRANSFERASE"/>
    <property type="match status" value="1"/>
</dbReference>
<dbReference type="PANTHER" id="PTHR43285:SF2">
    <property type="entry name" value="ANTHRANILATE PHOSPHORIBOSYLTRANSFERASE"/>
    <property type="match status" value="1"/>
</dbReference>
<dbReference type="Pfam" id="PF02885">
    <property type="entry name" value="Glycos_trans_3N"/>
    <property type="match status" value="1"/>
</dbReference>
<dbReference type="Pfam" id="PF00591">
    <property type="entry name" value="Glycos_transf_3"/>
    <property type="match status" value="1"/>
</dbReference>
<dbReference type="SUPFAM" id="SSF52418">
    <property type="entry name" value="Nucleoside phosphorylase/phosphoribosyltransferase catalytic domain"/>
    <property type="match status" value="1"/>
</dbReference>
<dbReference type="SUPFAM" id="SSF47648">
    <property type="entry name" value="Nucleoside phosphorylase/phosphoribosyltransferase N-terminal domain"/>
    <property type="match status" value="1"/>
</dbReference>
<proteinExistence type="inferred from homology"/>
<name>TRPD_CHLSY</name>
<organism>
    <name type="scientific">Chloroflexus aurantiacus (strain ATCC 29364 / DSM 637 / Y-400-fl)</name>
    <dbReference type="NCBI Taxonomy" id="480224"/>
    <lineage>
        <taxon>Bacteria</taxon>
        <taxon>Bacillati</taxon>
        <taxon>Chloroflexota</taxon>
        <taxon>Chloroflexia</taxon>
        <taxon>Chloroflexales</taxon>
        <taxon>Chloroflexineae</taxon>
        <taxon>Chloroflexaceae</taxon>
        <taxon>Chloroflexus</taxon>
    </lineage>
</organism>
<protein>
    <recommendedName>
        <fullName evidence="1">Anthranilate phosphoribosyltransferase</fullName>
        <ecNumber evidence="1">2.4.2.18</ecNumber>
    </recommendedName>
</protein>
<comment type="function">
    <text evidence="1">Catalyzes the transfer of the phosphoribosyl group of 5-phosphorylribose-1-pyrophosphate (PRPP) to anthranilate to yield N-(5'-phosphoribosyl)-anthranilate (PRA).</text>
</comment>
<comment type="catalytic activity">
    <reaction evidence="1">
        <text>N-(5-phospho-beta-D-ribosyl)anthranilate + diphosphate = 5-phospho-alpha-D-ribose 1-diphosphate + anthranilate</text>
        <dbReference type="Rhea" id="RHEA:11768"/>
        <dbReference type="ChEBI" id="CHEBI:16567"/>
        <dbReference type="ChEBI" id="CHEBI:18277"/>
        <dbReference type="ChEBI" id="CHEBI:33019"/>
        <dbReference type="ChEBI" id="CHEBI:58017"/>
        <dbReference type="EC" id="2.4.2.18"/>
    </reaction>
</comment>
<comment type="cofactor">
    <cofactor evidence="1">
        <name>Mg(2+)</name>
        <dbReference type="ChEBI" id="CHEBI:18420"/>
    </cofactor>
    <text evidence="1">Binds 2 magnesium ions per monomer.</text>
</comment>
<comment type="pathway">
    <text evidence="1">Amino-acid biosynthesis; L-tryptophan biosynthesis; L-tryptophan from chorismate: step 2/5.</text>
</comment>
<comment type="subunit">
    <text evidence="1">Homodimer.</text>
</comment>
<comment type="similarity">
    <text evidence="1">Belongs to the anthranilate phosphoribosyltransferase family.</text>
</comment>
<feature type="chain" id="PRO_1000198813" description="Anthranilate phosphoribosyltransferase">
    <location>
        <begin position="1"/>
        <end position="339"/>
    </location>
</feature>
<feature type="binding site" evidence="1">
    <location>
        <position position="80"/>
    </location>
    <ligand>
        <name>5-phospho-alpha-D-ribose 1-diphosphate</name>
        <dbReference type="ChEBI" id="CHEBI:58017"/>
    </ligand>
</feature>
<feature type="binding site" evidence="1">
    <location>
        <position position="80"/>
    </location>
    <ligand>
        <name>anthranilate</name>
        <dbReference type="ChEBI" id="CHEBI:16567"/>
        <label>1</label>
    </ligand>
</feature>
<feature type="binding site" evidence="1">
    <location>
        <begin position="83"/>
        <end position="84"/>
    </location>
    <ligand>
        <name>5-phospho-alpha-D-ribose 1-diphosphate</name>
        <dbReference type="ChEBI" id="CHEBI:58017"/>
    </ligand>
</feature>
<feature type="binding site" evidence="1">
    <location>
        <position position="88"/>
    </location>
    <ligand>
        <name>5-phospho-alpha-D-ribose 1-diphosphate</name>
        <dbReference type="ChEBI" id="CHEBI:58017"/>
    </ligand>
</feature>
<feature type="binding site" evidence="1">
    <location>
        <begin position="90"/>
        <end position="93"/>
    </location>
    <ligand>
        <name>5-phospho-alpha-D-ribose 1-diphosphate</name>
        <dbReference type="ChEBI" id="CHEBI:58017"/>
    </ligand>
</feature>
<feature type="binding site" evidence="1">
    <location>
        <position position="92"/>
    </location>
    <ligand>
        <name>Mg(2+)</name>
        <dbReference type="ChEBI" id="CHEBI:18420"/>
        <label>1</label>
    </ligand>
</feature>
<feature type="binding site" evidence="1">
    <location>
        <begin position="108"/>
        <end position="116"/>
    </location>
    <ligand>
        <name>5-phospho-alpha-D-ribose 1-diphosphate</name>
        <dbReference type="ChEBI" id="CHEBI:58017"/>
    </ligand>
</feature>
<feature type="binding site" evidence="1">
    <location>
        <position position="111"/>
    </location>
    <ligand>
        <name>anthranilate</name>
        <dbReference type="ChEBI" id="CHEBI:16567"/>
        <label>1</label>
    </ligand>
</feature>
<feature type="binding site" evidence="1">
    <location>
        <position position="120"/>
    </location>
    <ligand>
        <name>5-phospho-alpha-D-ribose 1-diphosphate</name>
        <dbReference type="ChEBI" id="CHEBI:58017"/>
    </ligand>
</feature>
<feature type="binding site" evidence="1">
    <location>
        <position position="166"/>
    </location>
    <ligand>
        <name>anthranilate</name>
        <dbReference type="ChEBI" id="CHEBI:16567"/>
        <label>2</label>
    </ligand>
</feature>
<feature type="binding site" evidence="1">
    <location>
        <position position="225"/>
    </location>
    <ligand>
        <name>Mg(2+)</name>
        <dbReference type="ChEBI" id="CHEBI:18420"/>
        <label>2</label>
    </ligand>
</feature>
<feature type="binding site" evidence="1">
    <location>
        <position position="226"/>
    </location>
    <ligand>
        <name>Mg(2+)</name>
        <dbReference type="ChEBI" id="CHEBI:18420"/>
        <label>1</label>
    </ligand>
</feature>
<feature type="binding site" evidence="1">
    <location>
        <position position="226"/>
    </location>
    <ligand>
        <name>Mg(2+)</name>
        <dbReference type="ChEBI" id="CHEBI:18420"/>
        <label>2</label>
    </ligand>
</feature>
<sequence length="339" mass="35284">MNIREAIAAVVARRDLTQAEAASVMEEIMSGTATPAQIGAFLTALHMKGETDAEIAGMAAVMREKATHVYFDGPVIDTCGTGGDGAHTFNISTTAAFVAAGAGLTVAKHGNRAMSSVCGSADVLEGLGVQIELDAEGVARCLREAGIGFMFAPKFHPAMRFAGPVRREIGIRTVFNILGPLTNPARARYQVLGVASAALAEKLAYALSRLDTVHALVVHGDGGVDELTLSGPNLIFDVRAGQAPRQMLVAPEDVGLPRAPQDALRGGDVAYNVAIVRAILSGEEHGPRRDVVLFNAAAAMVAGDLAPDLATGVAMARHSIDSGRALERLNQMIAVSRGE</sequence>
<keyword id="KW-0028">Amino-acid biosynthesis</keyword>
<keyword id="KW-0057">Aromatic amino acid biosynthesis</keyword>
<keyword id="KW-0328">Glycosyltransferase</keyword>
<keyword id="KW-0460">Magnesium</keyword>
<keyword id="KW-0479">Metal-binding</keyword>
<keyword id="KW-0808">Transferase</keyword>
<keyword id="KW-0822">Tryptophan biosynthesis</keyword>
<evidence type="ECO:0000255" key="1">
    <source>
        <dbReference type="HAMAP-Rule" id="MF_00211"/>
    </source>
</evidence>